<protein>
    <recommendedName>
        <fullName>Growth/differentiation factor 7</fullName>
        <shortName>GDF-7</shortName>
    </recommendedName>
</protein>
<proteinExistence type="evidence at protein level"/>
<gene>
    <name type="primary">GDF7</name>
</gene>
<accession>Q7Z4P5</accession>
<feature type="signal peptide" evidence="2">
    <location>
        <begin position="1"/>
        <end position="19"/>
    </location>
</feature>
<feature type="propeptide" id="PRO_0000033922" evidence="2">
    <location>
        <begin position="20"/>
        <end position="321"/>
    </location>
</feature>
<feature type="chain" id="PRO_0000033923" description="Growth/differentiation factor 7">
    <location>
        <begin position="322"/>
        <end position="450"/>
    </location>
</feature>
<feature type="region of interest" description="Disordered" evidence="3">
    <location>
        <begin position="296"/>
        <end position="349"/>
    </location>
</feature>
<feature type="compositionally biased region" description="Basic residues" evidence="3">
    <location>
        <begin position="340"/>
        <end position="349"/>
    </location>
</feature>
<feature type="glycosylation site" description="N-linked (GlcNAc...) asparagine" evidence="2">
    <location>
        <position position="83"/>
    </location>
</feature>
<feature type="disulfide bond" evidence="1">
    <location>
        <begin position="349"/>
        <end position="415"/>
    </location>
</feature>
<feature type="disulfide bond" evidence="1">
    <location>
        <begin position="378"/>
        <end position="447"/>
    </location>
</feature>
<feature type="disulfide bond" evidence="1">
    <location>
        <begin position="382"/>
        <end position="449"/>
    </location>
</feature>
<feature type="disulfide bond" description="Interchain" evidence="1">
    <location>
        <position position="414"/>
    </location>
</feature>
<feature type="sequence conflict" description="In Ref. 1; AAP97720." evidence="4" ref="1">
    <original>A</original>
    <variation>S</variation>
    <location>
        <position position="330"/>
    </location>
</feature>
<dbReference type="EMBL" id="AF522369">
    <property type="protein sequence ID" value="AAP97720.1"/>
    <property type="molecule type" value="mRNA"/>
</dbReference>
<dbReference type="EMBL" id="AC012065">
    <property type="status" value="NOT_ANNOTATED_CDS"/>
    <property type="molecule type" value="Genomic_DNA"/>
</dbReference>
<dbReference type="CCDS" id="CCDS1701.1"/>
<dbReference type="RefSeq" id="NP_878248.2">
    <property type="nucleotide sequence ID" value="NM_182828.4"/>
</dbReference>
<dbReference type="SMR" id="Q7Z4P5"/>
<dbReference type="FunCoup" id="Q7Z4P5">
    <property type="interactions" value="631"/>
</dbReference>
<dbReference type="STRING" id="9606.ENSP00000272224"/>
<dbReference type="GlyCosmos" id="Q7Z4P5">
    <property type="glycosylation" value="1 site, No reported glycans"/>
</dbReference>
<dbReference type="GlyGen" id="Q7Z4P5">
    <property type="glycosylation" value="2 sites, 1 O-linked glycan (1 site)"/>
</dbReference>
<dbReference type="iPTMnet" id="Q7Z4P5"/>
<dbReference type="PhosphoSitePlus" id="Q7Z4P5"/>
<dbReference type="BioMuta" id="GDF7"/>
<dbReference type="DMDM" id="296434517"/>
<dbReference type="MassIVE" id="Q7Z4P5"/>
<dbReference type="PaxDb" id="9606-ENSP00000272224"/>
<dbReference type="PeptideAtlas" id="Q7Z4P5"/>
<dbReference type="ProteomicsDB" id="69219"/>
<dbReference type="Antibodypedia" id="27314">
    <property type="antibodies" value="273 antibodies from 29 providers"/>
</dbReference>
<dbReference type="DNASU" id="151449"/>
<dbReference type="Ensembl" id="ENST00000272224.5">
    <property type="protein sequence ID" value="ENSP00000272224.3"/>
    <property type="gene ID" value="ENSG00000143869.7"/>
</dbReference>
<dbReference type="GeneID" id="151449"/>
<dbReference type="KEGG" id="hsa:151449"/>
<dbReference type="MANE-Select" id="ENST00000272224.5">
    <property type="protein sequence ID" value="ENSP00000272224.3"/>
    <property type="RefSeq nucleotide sequence ID" value="NM_182828.4"/>
    <property type="RefSeq protein sequence ID" value="NP_878248.2"/>
</dbReference>
<dbReference type="UCSC" id="uc002rdz.2">
    <property type="organism name" value="human"/>
</dbReference>
<dbReference type="AGR" id="HGNC:4222"/>
<dbReference type="CTD" id="151449"/>
<dbReference type="DisGeNET" id="151449"/>
<dbReference type="GeneCards" id="GDF7"/>
<dbReference type="HGNC" id="HGNC:4222">
    <property type="gene designation" value="GDF7"/>
</dbReference>
<dbReference type="HPA" id="ENSG00000143869">
    <property type="expression patterns" value="Tissue enhanced (cervix, seminal vesicle)"/>
</dbReference>
<dbReference type="MIM" id="604651">
    <property type="type" value="gene"/>
</dbReference>
<dbReference type="neXtProt" id="NX_Q7Z4P5"/>
<dbReference type="OpenTargets" id="ENSG00000143869"/>
<dbReference type="PharmGKB" id="PA28637"/>
<dbReference type="VEuPathDB" id="HostDB:ENSG00000143869"/>
<dbReference type="eggNOG" id="KOG3900">
    <property type="taxonomic scope" value="Eukaryota"/>
</dbReference>
<dbReference type="GeneTree" id="ENSGT00940000160140"/>
<dbReference type="HOGENOM" id="CLU_020515_0_1_1"/>
<dbReference type="InParanoid" id="Q7Z4P5"/>
<dbReference type="OMA" id="GARWEVF"/>
<dbReference type="OrthoDB" id="5987191at2759"/>
<dbReference type="PAN-GO" id="Q7Z4P5">
    <property type="GO annotations" value="5 GO annotations based on evolutionary models"/>
</dbReference>
<dbReference type="PhylomeDB" id="Q7Z4P5"/>
<dbReference type="TreeFam" id="TF316134"/>
<dbReference type="PathwayCommons" id="Q7Z4P5"/>
<dbReference type="SignaLink" id="Q7Z4P5"/>
<dbReference type="BioGRID-ORCS" id="151449">
    <property type="hits" value="15 hits in 1144 CRISPR screens"/>
</dbReference>
<dbReference type="GeneWiki" id="GDF7"/>
<dbReference type="GenomeRNAi" id="151449"/>
<dbReference type="Pharos" id="Q7Z4P5">
    <property type="development level" value="Tbio"/>
</dbReference>
<dbReference type="PRO" id="PR:Q7Z4P5"/>
<dbReference type="Proteomes" id="UP000005640">
    <property type="component" value="Chromosome 2"/>
</dbReference>
<dbReference type="RNAct" id="Q7Z4P5">
    <property type="molecule type" value="protein"/>
</dbReference>
<dbReference type="Bgee" id="ENSG00000143869">
    <property type="expression patterns" value="Expressed in seminal vesicle and 129 other cell types or tissues"/>
</dbReference>
<dbReference type="GO" id="GO:0005615">
    <property type="term" value="C:extracellular space"/>
    <property type="evidence" value="ECO:0000318"/>
    <property type="project" value="GO_Central"/>
</dbReference>
<dbReference type="GO" id="GO:0005125">
    <property type="term" value="F:cytokine activity"/>
    <property type="evidence" value="ECO:0000318"/>
    <property type="project" value="GO_Central"/>
</dbReference>
<dbReference type="GO" id="GO:0008083">
    <property type="term" value="F:growth factor activity"/>
    <property type="evidence" value="ECO:0007669"/>
    <property type="project" value="UniProtKB-KW"/>
</dbReference>
<dbReference type="GO" id="GO:0042802">
    <property type="term" value="F:identical protein binding"/>
    <property type="evidence" value="ECO:0007669"/>
    <property type="project" value="Ensembl"/>
</dbReference>
<dbReference type="GO" id="GO:0032924">
    <property type="term" value="P:activin receptor signaling pathway"/>
    <property type="evidence" value="ECO:0000314"/>
    <property type="project" value="BHF-UCL"/>
</dbReference>
<dbReference type="GO" id="GO:0007411">
    <property type="term" value="P:axon guidance"/>
    <property type="evidence" value="ECO:0007669"/>
    <property type="project" value="Ensembl"/>
</dbReference>
<dbReference type="GO" id="GO:0030509">
    <property type="term" value="P:BMP signaling pathway"/>
    <property type="evidence" value="ECO:0000314"/>
    <property type="project" value="BHF-UCL"/>
</dbReference>
<dbReference type="GO" id="GO:0048754">
    <property type="term" value="P:branching morphogenesis of an epithelial tube"/>
    <property type="evidence" value="ECO:0007669"/>
    <property type="project" value="Ensembl"/>
</dbReference>
<dbReference type="GO" id="GO:0045165">
    <property type="term" value="P:cell fate commitment"/>
    <property type="evidence" value="ECO:0007669"/>
    <property type="project" value="Ensembl"/>
</dbReference>
<dbReference type="GO" id="GO:0030855">
    <property type="term" value="P:epithelial cell differentiation"/>
    <property type="evidence" value="ECO:0007669"/>
    <property type="project" value="Ensembl"/>
</dbReference>
<dbReference type="GO" id="GO:0048853">
    <property type="term" value="P:forebrain morphogenesis"/>
    <property type="evidence" value="ECO:0007669"/>
    <property type="project" value="Ensembl"/>
</dbReference>
<dbReference type="GO" id="GO:0022612">
    <property type="term" value="P:gland morphogenesis"/>
    <property type="evidence" value="ECO:0007669"/>
    <property type="project" value="Ensembl"/>
</dbReference>
<dbReference type="GO" id="GO:0030901">
    <property type="term" value="P:midbrain development"/>
    <property type="evidence" value="ECO:0007669"/>
    <property type="project" value="Ensembl"/>
</dbReference>
<dbReference type="GO" id="GO:0060571">
    <property type="term" value="P:morphogenesis of an epithelial fold"/>
    <property type="evidence" value="ECO:0007669"/>
    <property type="project" value="Ensembl"/>
</dbReference>
<dbReference type="GO" id="GO:0045893">
    <property type="term" value="P:positive regulation of DNA-templated transcription"/>
    <property type="evidence" value="ECO:0000314"/>
    <property type="project" value="BHF-UCL"/>
</dbReference>
<dbReference type="GO" id="GO:0010628">
    <property type="term" value="P:positive regulation of gene expression"/>
    <property type="evidence" value="ECO:0007669"/>
    <property type="project" value="Ensembl"/>
</dbReference>
<dbReference type="GO" id="GO:0045666">
    <property type="term" value="P:positive regulation of neuron differentiation"/>
    <property type="evidence" value="ECO:0007669"/>
    <property type="project" value="Ensembl"/>
</dbReference>
<dbReference type="GO" id="GO:0060391">
    <property type="term" value="P:positive regulation of SMAD protein signal transduction"/>
    <property type="evidence" value="ECO:0000314"/>
    <property type="project" value="BHF-UCL"/>
</dbReference>
<dbReference type="GO" id="GO:2001051">
    <property type="term" value="P:positive regulation of tendon cell differentiation"/>
    <property type="evidence" value="ECO:0007669"/>
    <property type="project" value="Ensembl"/>
</dbReference>
<dbReference type="GO" id="GO:0048608">
    <property type="term" value="P:reproductive structure development"/>
    <property type="evidence" value="ECO:0007669"/>
    <property type="project" value="Ensembl"/>
</dbReference>
<dbReference type="GO" id="GO:0021509">
    <property type="term" value="P:roof plate formation"/>
    <property type="evidence" value="ECO:0007669"/>
    <property type="project" value="Ensembl"/>
</dbReference>
<dbReference type="GO" id="GO:0021527">
    <property type="term" value="P:spinal cord association neuron differentiation"/>
    <property type="evidence" value="ECO:0007669"/>
    <property type="project" value="Ensembl"/>
</dbReference>
<dbReference type="CDD" id="cd13766">
    <property type="entry name" value="TGF_beta_GDF5_6_7"/>
    <property type="match status" value="1"/>
</dbReference>
<dbReference type="FunFam" id="2.10.90.10:FF:000001">
    <property type="entry name" value="Bone morphogenetic protein 4"/>
    <property type="match status" value="1"/>
</dbReference>
<dbReference type="FunFam" id="2.60.120.970:FF:000032">
    <property type="entry name" value="Growth differentiation factor 7"/>
    <property type="match status" value="1"/>
</dbReference>
<dbReference type="Gene3D" id="2.60.120.970">
    <property type="match status" value="1"/>
</dbReference>
<dbReference type="Gene3D" id="2.10.90.10">
    <property type="entry name" value="Cystine-knot cytokines"/>
    <property type="match status" value="1"/>
</dbReference>
<dbReference type="InterPro" id="IPR029034">
    <property type="entry name" value="Cystine-knot_cytokine"/>
</dbReference>
<dbReference type="InterPro" id="IPR001839">
    <property type="entry name" value="TGF-b_C"/>
</dbReference>
<dbReference type="InterPro" id="IPR001111">
    <property type="entry name" value="TGF-b_propeptide"/>
</dbReference>
<dbReference type="InterPro" id="IPR015615">
    <property type="entry name" value="TGF-beta-rel"/>
</dbReference>
<dbReference type="InterPro" id="IPR017948">
    <property type="entry name" value="TGFb_CS"/>
</dbReference>
<dbReference type="PANTHER" id="PTHR11848:SF160">
    <property type="entry name" value="GROWTH_DIFFERENTIATION FACTOR 7"/>
    <property type="match status" value="1"/>
</dbReference>
<dbReference type="PANTHER" id="PTHR11848">
    <property type="entry name" value="TGF-BETA FAMILY"/>
    <property type="match status" value="1"/>
</dbReference>
<dbReference type="Pfam" id="PF00019">
    <property type="entry name" value="TGF_beta"/>
    <property type="match status" value="1"/>
</dbReference>
<dbReference type="Pfam" id="PF00688">
    <property type="entry name" value="TGFb_propeptide"/>
    <property type="match status" value="1"/>
</dbReference>
<dbReference type="SMART" id="SM00204">
    <property type="entry name" value="TGFB"/>
    <property type="match status" value="1"/>
</dbReference>
<dbReference type="SUPFAM" id="SSF57501">
    <property type="entry name" value="Cystine-knot cytokines"/>
    <property type="match status" value="1"/>
</dbReference>
<dbReference type="PROSITE" id="PS00250">
    <property type="entry name" value="TGF_BETA_1"/>
    <property type="match status" value="1"/>
</dbReference>
<dbReference type="PROSITE" id="PS51362">
    <property type="entry name" value="TGF_BETA_2"/>
    <property type="match status" value="1"/>
</dbReference>
<name>GDF7_HUMAN</name>
<comment type="function">
    <text evidence="1">May play an active role in the motor area of the primate neocortex.</text>
</comment>
<comment type="subunit">
    <text evidence="1">Homodimer; disulfide-linked.</text>
</comment>
<comment type="subcellular location">
    <subcellularLocation>
        <location evidence="1">Secreted</location>
    </subcellularLocation>
</comment>
<comment type="similarity">
    <text evidence="4">Belongs to the TGF-beta family.</text>
</comment>
<keyword id="KW-0165">Cleavage on pair of basic residues</keyword>
<keyword id="KW-0202">Cytokine</keyword>
<keyword id="KW-1015">Disulfide bond</keyword>
<keyword id="KW-0325">Glycoprotein</keyword>
<keyword id="KW-0339">Growth factor</keyword>
<keyword id="KW-1267">Proteomics identification</keyword>
<keyword id="KW-1185">Reference proteome</keyword>
<keyword id="KW-0964">Secreted</keyword>
<keyword id="KW-0732">Signal</keyword>
<sequence>MDLSAAAALCLWLLSACRPRDGLEAAAVLRAAGAGPVRSPGGGGGGGGGGRTLAQAAGAAAVPAAAVPRARAARRAAGSGFRNGSVVPHHFMMSLYRSLAGRAPAGAAAVSASGHGRADTITGFTDQATQDESAAETGQSFLFDVSSLNDADEVVGAELRVLRRGSPESGPGSWTSPPLLLLSTCPGAARAPRLLYSRAAEPLVGQRWEAFDVADAMRRHRREPRPPRAFCLLLRAVAGPVPSPLALRRLGFGWPGGGGSAAEERAVLVVSSRTQRKESLFREIRAQARALGAALASEPLPDPGTGTASPRAVIGGRRRRRTALAGTRTAQGSGGGAGRGHGRRGRSRCSRKPLHVDFKELGWDDWIIAPLDYEAYHCEGLCDFPLRSHLEPTNHAIIQTLLNSMAPDAAPASCCVPARLSPISILYIDAANNVVYKQYEDMVVEACGCR</sequence>
<organism>
    <name type="scientific">Homo sapiens</name>
    <name type="common">Human</name>
    <dbReference type="NCBI Taxonomy" id="9606"/>
    <lineage>
        <taxon>Eukaryota</taxon>
        <taxon>Metazoa</taxon>
        <taxon>Chordata</taxon>
        <taxon>Craniata</taxon>
        <taxon>Vertebrata</taxon>
        <taxon>Euteleostomi</taxon>
        <taxon>Mammalia</taxon>
        <taxon>Eutheria</taxon>
        <taxon>Euarchontoglires</taxon>
        <taxon>Primates</taxon>
        <taxon>Haplorrhini</taxon>
        <taxon>Catarrhini</taxon>
        <taxon>Hominidae</taxon>
        <taxon>Homo</taxon>
    </lineage>
</organism>
<reference key="1">
    <citation type="submission" date="2002-06" db="EMBL/GenBank/DDBJ databases">
        <authorList>
            <person name="Guo J.H."/>
            <person name="Yu L."/>
        </authorList>
    </citation>
    <scope>NUCLEOTIDE SEQUENCE [LARGE SCALE MRNA]</scope>
    <source>
        <tissue>Testis</tissue>
    </source>
</reference>
<reference key="2">
    <citation type="journal article" date="2005" name="Nature">
        <title>Generation and annotation of the DNA sequences of human chromosomes 2 and 4.</title>
        <authorList>
            <person name="Hillier L.W."/>
            <person name="Graves T.A."/>
            <person name="Fulton R.S."/>
            <person name="Fulton L.A."/>
            <person name="Pepin K.H."/>
            <person name="Minx P."/>
            <person name="Wagner-McPherson C."/>
            <person name="Layman D."/>
            <person name="Wylie K."/>
            <person name="Sekhon M."/>
            <person name="Becker M.C."/>
            <person name="Fewell G.A."/>
            <person name="Delehaunty K.D."/>
            <person name="Miner T.L."/>
            <person name="Nash W.E."/>
            <person name="Kremitzki C."/>
            <person name="Oddy L."/>
            <person name="Du H."/>
            <person name="Sun H."/>
            <person name="Bradshaw-Cordum H."/>
            <person name="Ali J."/>
            <person name="Carter J."/>
            <person name="Cordes M."/>
            <person name="Harris A."/>
            <person name="Isak A."/>
            <person name="van Brunt A."/>
            <person name="Nguyen C."/>
            <person name="Du F."/>
            <person name="Courtney L."/>
            <person name="Kalicki J."/>
            <person name="Ozersky P."/>
            <person name="Abbott S."/>
            <person name="Armstrong J."/>
            <person name="Belter E.A."/>
            <person name="Caruso L."/>
            <person name="Cedroni M."/>
            <person name="Cotton M."/>
            <person name="Davidson T."/>
            <person name="Desai A."/>
            <person name="Elliott G."/>
            <person name="Erb T."/>
            <person name="Fronick C."/>
            <person name="Gaige T."/>
            <person name="Haakenson W."/>
            <person name="Haglund K."/>
            <person name="Holmes A."/>
            <person name="Harkins R."/>
            <person name="Kim K."/>
            <person name="Kruchowski S.S."/>
            <person name="Strong C.M."/>
            <person name="Grewal N."/>
            <person name="Goyea E."/>
            <person name="Hou S."/>
            <person name="Levy A."/>
            <person name="Martinka S."/>
            <person name="Mead K."/>
            <person name="McLellan M.D."/>
            <person name="Meyer R."/>
            <person name="Randall-Maher J."/>
            <person name="Tomlinson C."/>
            <person name="Dauphin-Kohlberg S."/>
            <person name="Kozlowicz-Reilly A."/>
            <person name="Shah N."/>
            <person name="Swearengen-Shahid S."/>
            <person name="Snider J."/>
            <person name="Strong J.T."/>
            <person name="Thompson J."/>
            <person name="Yoakum M."/>
            <person name="Leonard S."/>
            <person name="Pearman C."/>
            <person name="Trani L."/>
            <person name="Radionenko M."/>
            <person name="Waligorski J.E."/>
            <person name="Wang C."/>
            <person name="Rock S.M."/>
            <person name="Tin-Wollam A.-M."/>
            <person name="Maupin R."/>
            <person name="Latreille P."/>
            <person name="Wendl M.C."/>
            <person name="Yang S.-P."/>
            <person name="Pohl C."/>
            <person name="Wallis J.W."/>
            <person name="Spieth J."/>
            <person name="Bieri T.A."/>
            <person name="Berkowicz N."/>
            <person name="Nelson J.O."/>
            <person name="Osborne J."/>
            <person name="Ding L."/>
            <person name="Meyer R."/>
            <person name="Sabo A."/>
            <person name="Shotland Y."/>
            <person name="Sinha P."/>
            <person name="Wohldmann P.E."/>
            <person name="Cook L.L."/>
            <person name="Hickenbotham M.T."/>
            <person name="Eldred J."/>
            <person name="Williams D."/>
            <person name="Jones T.A."/>
            <person name="She X."/>
            <person name="Ciccarelli F.D."/>
            <person name="Izaurralde E."/>
            <person name="Taylor J."/>
            <person name="Schmutz J."/>
            <person name="Myers R.M."/>
            <person name="Cox D.R."/>
            <person name="Huang X."/>
            <person name="McPherson J.D."/>
            <person name="Mardis E.R."/>
            <person name="Clifton S.W."/>
            <person name="Warren W.C."/>
            <person name="Chinwalla A.T."/>
            <person name="Eddy S.R."/>
            <person name="Marra M.A."/>
            <person name="Ovcharenko I."/>
            <person name="Furey T.S."/>
            <person name="Miller W."/>
            <person name="Eichler E.E."/>
            <person name="Bork P."/>
            <person name="Suyama M."/>
            <person name="Torrents D."/>
            <person name="Waterston R.H."/>
            <person name="Wilson R.K."/>
        </authorList>
    </citation>
    <scope>NUCLEOTIDE SEQUENCE [LARGE SCALE GENOMIC DNA]</scope>
</reference>
<evidence type="ECO:0000250" key="1"/>
<evidence type="ECO:0000255" key="2"/>
<evidence type="ECO:0000256" key="3">
    <source>
        <dbReference type="SAM" id="MobiDB-lite"/>
    </source>
</evidence>
<evidence type="ECO:0000305" key="4"/>